<sequence>MKIDILTLFPEMFAPLEHSIVGKAKEKGLLDIHYHNFRDHAEKARHVDDEPYGGGQGMLLRAQPIFDTMDSIQATKPRVILLDPAGKPFHQSYAEELALEEELIFICGHYEGYDERIKTLITDEISLGDFVLTGGELAAMTMIDATVRLIPNVLGKQASHQEDSFSSGLLEYPQYTRPYDYRGMKVPDVLMSGHHEHIRLWRMEQSLKKTYLRRPDLLETYDFSDEERRIFDKIKSELSEGEN</sequence>
<protein>
    <recommendedName>
        <fullName evidence="1">tRNA (guanine-N(1)-)-methyltransferase</fullName>
        <ecNumber evidence="1">2.1.1.228</ecNumber>
    </recommendedName>
    <alternativeName>
        <fullName evidence="1">M1G-methyltransferase</fullName>
    </alternativeName>
    <alternativeName>
        <fullName evidence="1">tRNA [GM37] methyltransferase</fullName>
    </alternativeName>
</protein>
<evidence type="ECO:0000255" key="1">
    <source>
        <dbReference type="HAMAP-Rule" id="MF_00605"/>
    </source>
</evidence>
<dbReference type="EC" id="2.1.1.228" evidence="1"/>
<dbReference type="EMBL" id="CP001129">
    <property type="protein sequence ID" value="ACG62462.1"/>
    <property type="molecule type" value="Genomic_DNA"/>
</dbReference>
<dbReference type="RefSeq" id="WP_012515730.1">
    <property type="nucleotide sequence ID" value="NC_011134.1"/>
</dbReference>
<dbReference type="SMR" id="B4U395"/>
<dbReference type="KEGG" id="sez:Sez_1110"/>
<dbReference type="HOGENOM" id="CLU_047363_0_1_9"/>
<dbReference type="Proteomes" id="UP000001873">
    <property type="component" value="Chromosome"/>
</dbReference>
<dbReference type="GO" id="GO:0005829">
    <property type="term" value="C:cytosol"/>
    <property type="evidence" value="ECO:0007669"/>
    <property type="project" value="TreeGrafter"/>
</dbReference>
<dbReference type="GO" id="GO:0052906">
    <property type="term" value="F:tRNA (guanine(37)-N1)-methyltransferase activity"/>
    <property type="evidence" value="ECO:0007669"/>
    <property type="project" value="UniProtKB-UniRule"/>
</dbReference>
<dbReference type="GO" id="GO:0002939">
    <property type="term" value="P:tRNA N1-guanine methylation"/>
    <property type="evidence" value="ECO:0007669"/>
    <property type="project" value="TreeGrafter"/>
</dbReference>
<dbReference type="CDD" id="cd18080">
    <property type="entry name" value="TrmD-like"/>
    <property type="match status" value="1"/>
</dbReference>
<dbReference type="FunFam" id="1.10.1270.20:FF:000001">
    <property type="entry name" value="tRNA (guanine-N(1)-)-methyltransferase"/>
    <property type="match status" value="1"/>
</dbReference>
<dbReference type="FunFam" id="3.40.1280.10:FF:000001">
    <property type="entry name" value="tRNA (guanine-N(1)-)-methyltransferase"/>
    <property type="match status" value="1"/>
</dbReference>
<dbReference type="Gene3D" id="3.40.1280.10">
    <property type="match status" value="1"/>
</dbReference>
<dbReference type="Gene3D" id="1.10.1270.20">
    <property type="entry name" value="tRNA(m1g37)methyltransferase, domain 2"/>
    <property type="match status" value="1"/>
</dbReference>
<dbReference type="HAMAP" id="MF_00605">
    <property type="entry name" value="TrmD"/>
    <property type="match status" value="1"/>
</dbReference>
<dbReference type="InterPro" id="IPR029028">
    <property type="entry name" value="Alpha/beta_knot_MTases"/>
</dbReference>
<dbReference type="InterPro" id="IPR023148">
    <property type="entry name" value="tRNA_m1G_MeTrfase_C_sf"/>
</dbReference>
<dbReference type="InterPro" id="IPR002649">
    <property type="entry name" value="tRNA_m1G_MeTrfase_TrmD"/>
</dbReference>
<dbReference type="InterPro" id="IPR029026">
    <property type="entry name" value="tRNA_m1G_MTases_N"/>
</dbReference>
<dbReference type="InterPro" id="IPR016009">
    <property type="entry name" value="tRNA_MeTrfase_TRMD/TRM10"/>
</dbReference>
<dbReference type="NCBIfam" id="NF000648">
    <property type="entry name" value="PRK00026.1"/>
    <property type="match status" value="1"/>
</dbReference>
<dbReference type="NCBIfam" id="TIGR00088">
    <property type="entry name" value="trmD"/>
    <property type="match status" value="1"/>
</dbReference>
<dbReference type="PANTHER" id="PTHR46417">
    <property type="entry name" value="TRNA (GUANINE-N(1)-)-METHYLTRANSFERASE"/>
    <property type="match status" value="1"/>
</dbReference>
<dbReference type="PANTHER" id="PTHR46417:SF1">
    <property type="entry name" value="TRNA (GUANINE-N(1)-)-METHYLTRANSFERASE"/>
    <property type="match status" value="1"/>
</dbReference>
<dbReference type="Pfam" id="PF01746">
    <property type="entry name" value="tRNA_m1G_MT"/>
    <property type="match status" value="1"/>
</dbReference>
<dbReference type="PIRSF" id="PIRSF000386">
    <property type="entry name" value="tRNA_mtase"/>
    <property type="match status" value="1"/>
</dbReference>
<dbReference type="SUPFAM" id="SSF75217">
    <property type="entry name" value="alpha/beta knot"/>
    <property type="match status" value="1"/>
</dbReference>
<reference key="1">
    <citation type="journal article" date="2008" name="PLoS ONE">
        <title>Genome sequence of a lancefield group C Streptococcus zooepidemicus strain causing epidemic nephritis: new information about an old disease.</title>
        <authorList>
            <person name="Beres S.B."/>
            <person name="Sesso R."/>
            <person name="Pinto S.W.L."/>
            <person name="Hoe N.P."/>
            <person name="Porcella S.F."/>
            <person name="Deleo F.R."/>
            <person name="Musser J.M."/>
        </authorList>
    </citation>
    <scope>NUCLEOTIDE SEQUENCE [LARGE SCALE GENOMIC DNA]</scope>
    <source>
        <strain>MGCS10565</strain>
    </source>
</reference>
<organism>
    <name type="scientific">Streptococcus equi subsp. zooepidemicus (strain MGCS10565)</name>
    <dbReference type="NCBI Taxonomy" id="552526"/>
    <lineage>
        <taxon>Bacteria</taxon>
        <taxon>Bacillati</taxon>
        <taxon>Bacillota</taxon>
        <taxon>Bacilli</taxon>
        <taxon>Lactobacillales</taxon>
        <taxon>Streptococcaceae</taxon>
        <taxon>Streptococcus</taxon>
    </lineage>
</organism>
<gene>
    <name evidence="1" type="primary">trmD</name>
    <name type="ordered locus">Sez_1110</name>
</gene>
<proteinExistence type="inferred from homology"/>
<feature type="chain" id="PRO_1000130211" description="tRNA (guanine-N(1)-)-methyltransferase">
    <location>
        <begin position="1"/>
        <end position="243"/>
    </location>
</feature>
<feature type="binding site" evidence="1">
    <location>
        <position position="108"/>
    </location>
    <ligand>
        <name>S-adenosyl-L-methionine</name>
        <dbReference type="ChEBI" id="CHEBI:59789"/>
    </ligand>
</feature>
<feature type="binding site" evidence="1">
    <location>
        <begin position="127"/>
        <end position="132"/>
    </location>
    <ligand>
        <name>S-adenosyl-L-methionine</name>
        <dbReference type="ChEBI" id="CHEBI:59789"/>
    </ligand>
</feature>
<accession>B4U395</accession>
<comment type="function">
    <text evidence="1">Specifically methylates guanosine-37 in various tRNAs.</text>
</comment>
<comment type="catalytic activity">
    <reaction evidence="1">
        <text>guanosine(37) in tRNA + S-adenosyl-L-methionine = N(1)-methylguanosine(37) in tRNA + S-adenosyl-L-homocysteine + H(+)</text>
        <dbReference type="Rhea" id="RHEA:36899"/>
        <dbReference type="Rhea" id="RHEA-COMP:10145"/>
        <dbReference type="Rhea" id="RHEA-COMP:10147"/>
        <dbReference type="ChEBI" id="CHEBI:15378"/>
        <dbReference type="ChEBI" id="CHEBI:57856"/>
        <dbReference type="ChEBI" id="CHEBI:59789"/>
        <dbReference type="ChEBI" id="CHEBI:73542"/>
        <dbReference type="ChEBI" id="CHEBI:74269"/>
        <dbReference type="EC" id="2.1.1.228"/>
    </reaction>
</comment>
<comment type="subunit">
    <text evidence="1">Homodimer.</text>
</comment>
<comment type="subcellular location">
    <subcellularLocation>
        <location evidence="1">Cytoplasm</location>
    </subcellularLocation>
</comment>
<comment type="similarity">
    <text evidence="1">Belongs to the RNA methyltransferase TrmD family.</text>
</comment>
<name>TRMD_STREM</name>
<keyword id="KW-0963">Cytoplasm</keyword>
<keyword id="KW-0489">Methyltransferase</keyword>
<keyword id="KW-0949">S-adenosyl-L-methionine</keyword>
<keyword id="KW-0808">Transferase</keyword>
<keyword id="KW-0819">tRNA processing</keyword>